<comment type="function">
    <text evidence="1">Catalyzes the addition and repair of the essential 3'-terminal CCA sequence in tRNAs without using a nucleic acid template. Adds these three nucleotides in the order of C, C, and A to the tRNA nucleotide-73, using CTP and ATP as substrates and producing inorganic pyrophosphate. tRNA 3'-terminal CCA addition is required both for tRNA processing and repair. Also involved in tRNA surveillance by mediating tandem CCA addition to generate a CCACCA at the 3' terminus of unstable tRNAs. While stable tRNAs receive only 3'-terminal CCA, unstable tRNAs are marked with CCACCA and rapidly degraded.</text>
</comment>
<comment type="catalytic activity">
    <reaction evidence="1">
        <text>a tRNA precursor + 2 CTP + ATP = a tRNA with a 3' CCA end + 3 diphosphate</text>
        <dbReference type="Rhea" id="RHEA:14433"/>
        <dbReference type="Rhea" id="RHEA-COMP:10465"/>
        <dbReference type="Rhea" id="RHEA-COMP:10468"/>
        <dbReference type="ChEBI" id="CHEBI:30616"/>
        <dbReference type="ChEBI" id="CHEBI:33019"/>
        <dbReference type="ChEBI" id="CHEBI:37563"/>
        <dbReference type="ChEBI" id="CHEBI:74896"/>
        <dbReference type="ChEBI" id="CHEBI:83071"/>
        <dbReference type="EC" id="2.7.7.72"/>
    </reaction>
</comment>
<comment type="catalytic activity">
    <reaction evidence="1">
        <text>a tRNA with a 3' CCA end + 2 CTP + ATP = a tRNA with a 3' CCACCA end + 3 diphosphate</text>
        <dbReference type="Rhea" id="RHEA:76235"/>
        <dbReference type="Rhea" id="RHEA-COMP:10468"/>
        <dbReference type="Rhea" id="RHEA-COMP:18655"/>
        <dbReference type="ChEBI" id="CHEBI:30616"/>
        <dbReference type="ChEBI" id="CHEBI:33019"/>
        <dbReference type="ChEBI" id="CHEBI:37563"/>
        <dbReference type="ChEBI" id="CHEBI:83071"/>
        <dbReference type="ChEBI" id="CHEBI:195187"/>
    </reaction>
    <physiologicalReaction direction="left-to-right" evidence="1">
        <dbReference type="Rhea" id="RHEA:76236"/>
    </physiologicalReaction>
</comment>
<comment type="cofactor">
    <cofactor evidence="1">
        <name>Mg(2+)</name>
        <dbReference type="ChEBI" id="CHEBI:18420"/>
    </cofactor>
    <text evidence="1">Magnesium is required for nucleotidyltransferase activity.</text>
</comment>
<comment type="cofactor">
    <cofactor evidence="1">
        <name>Ni(2+)</name>
        <dbReference type="ChEBI" id="CHEBI:49786"/>
    </cofactor>
    <text evidence="1">Nickel for phosphatase activity.</text>
</comment>
<comment type="subunit">
    <text evidence="1">Monomer. Can also form homodimers and oligomers.</text>
</comment>
<comment type="domain">
    <text evidence="1">Comprises two domains: an N-terminal domain containing the nucleotidyltransferase activity and a C-terminal HD domain associated with both phosphodiesterase and phosphatase activities.</text>
</comment>
<comment type="miscellaneous">
    <text evidence="1">A single active site specifically recognizes both ATP and CTP and is responsible for their addition.</text>
</comment>
<comment type="similarity">
    <text evidence="1">Belongs to the tRNA nucleotidyltransferase/poly(A) polymerase family. Bacterial CCA-adding enzyme type 1 subfamily.</text>
</comment>
<name>CCA_PASMU</name>
<gene>
    <name evidence="1" type="primary">cca</name>
    <name type="ordered locus">PM0247</name>
</gene>
<reference key="1">
    <citation type="journal article" date="2001" name="Proc. Natl. Acad. Sci. U.S.A.">
        <title>Complete genomic sequence of Pasteurella multocida Pm70.</title>
        <authorList>
            <person name="May B.J."/>
            <person name="Zhang Q."/>
            <person name="Li L.L."/>
            <person name="Paustian M.L."/>
            <person name="Whittam T.S."/>
            <person name="Kapur V."/>
        </authorList>
    </citation>
    <scope>NUCLEOTIDE SEQUENCE [LARGE SCALE GENOMIC DNA]</scope>
    <source>
        <strain>Pm70</strain>
    </source>
</reference>
<proteinExistence type="inferred from homology"/>
<feature type="chain" id="PRO_0000138990" description="Multifunctional CCA protein">
    <location>
        <begin position="1"/>
        <end position="420"/>
    </location>
</feature>
<feature type="domain" description="HD" evidence="1">
    <location>
        <begin position="228"/>
        <end position="334"/>
    </location>
</feature>
<feature type="binding site" evidence="1">
    <location>
        <position position="8"/>
    </location>
    <ligand>
        <name>ATP</name>
        <dbReference type="ChEBI" id="CHEBI:30616"/>
    </ligand>
</feature>
<feature type="binding site" evidence="1">
    <location>
        <position position="8"/>
    </location>
    <ligand>
        <name>CTP</name>
        <dbReference type="ChEBI" id="CHEBI:37563"/>
    </ligand>
</feature>
<feature type="binding site" evidence="1">
    <location>
        <position position="11"/>
    </location>
    <ligand>
        <name>ATP</name>
        <dbReference type="ChEBI" id="CHEBI:30616"/>
    </ligand>
</feature>
<feature type="binding site" evidence="1">
    <location>
        <position position="11"/>
    </location>
    <ligand>
        <name>CTP</name>
        <dbReference type="ChEBI" id="CHEBI:37563"/>
    </ligand>
</feature>
<feature type="binding site" evidence="1">
    <location>
        <position position="21"/>
    </location>
    <ligand>
        <name>Mg(2+)</name>
        <dbReference type="ChEBI" id="CHEBI:18420"/>
    </ligand>
</feature>
<feature type="binding site" evidence="1">
    <location>
        <position position="23"/>
    </location>
    <ligand>
        <name>Mg(2+)</name>
        <dbReference type="ChEBI" id="CHEBI:18420"/>
    </ligand>
</feature>
<feature type="binding site" evidence="1">
    <location>
        <position position="91"/>
    </location>
    <ligand>
        <name>ATP</name>
        <dbReference type="ChEBI" id="CHEBI:30616"/>
    </ligand>
</feature>
<feature type="binding site" evidence="1">
    <location>
        <position position="91"/>
    </location>
    <ligand>
        <name>CTP</name>
        <dbReference type="ChEBI" id="CHEBI:37563"/>
    </ligand>
</feature>
<feature type="binding site" evidence="1">
    <location>
        <position position="137"/>
    </location>
    <ligand>
        <name>ATP</name>
        <dbReference type="ChEBI" id="CHEBI:30616"/>
    </ligand>
</feature>
<feature type="binding site" evidence="1">
    <location>
        <position position="137"/>
    </location>
    <ligand>
        <name>CTP</name>
        <dbReference type="ChEBI" id="CHEBI:37563"/>
    </ligand>
</feature>
<feature type="binding site" evidence="1">
    <location>
        <position position="140"/>
    </location>
    <ligand>
        <name>ATP</name>
        <dbReference type="ChEBI" id="CHEBI:30616"/>
    </ligand>
</feature>
<feature type="binding site" evidence="1">
    <location>
        <position position="140"/>
    </location>
    <ligand>
        <name>CTP</name>
        <dbReference type="ChEBI" id="CHEBI:37563"/>
    </ligand>
</feature>
<keyword id="KW-0067">ATP-binding</keyword>
<keyword id="KW-0378">Hydrolase</keyword>
<keyword id="KW-0460">Magnesium</keyword>
<keyword id="KW-0479">Metal-binding</keyword>
<keyword id="KW-0511">Multifunctional enzyme</keyword>
<keyword id="KW-0533">Nickel</keyword>
<keyword id="KW-0547">Nucleotide-binding</keyword>
<keyword id="KW-0548">Nucleotidyltransferase</keyword>
<keyword id="KW-1185">Reference proteome</keyword>
<keyword id="KW-0692">RNA repair</keyword>
<keyword id="KW-0694">RNA-binding</keyword>
<keyword id="KW-0808">Transferase</keyword>
<keyword id="KW-0819">tRNA processing</keyword>
<accession>Q9CP21</accession>
<dbReference type="EC" id="2.7.7.72" evidence="1"/>
<dbReference type="EC" id="3.1.3.-" evidence="1"/>
<dbReference type="EC" id="3.1.4.-" evidence="1"/>
<dbReference type="EMBL" id="AE004439">
    <property type="protein sequence ID" value="AAK02331.1"/>
    <property type="molecule type" value="Genomic_DNA"/>
</dbReference>
<dbReference type="SMR" id="Q9CP21"/>
<dbReference type="STRING" id="272843.PM0247"/>
<dbReference type="EnsemblBacteria" id="AAK02331">
    <property type="protein sequence ID" value="AAK02331"/>
    <property type="gene ID" value="PM0247"/>
</dbReference>
<dbReference type="KEGG" id="pmu:PM0247"/>
<dbReference type="HOGENOM" id="CLU_015961_1_1_6"/>
<dbReference type="Proteomes" id="UP000000809">
    <property type="component" value="Chromosome"/>
</dbReference>
<dbReference type="GO" id="GO:0005524">
    <property type="term" value="F:ATP binding"/>
    <property type="evidence" value="ECO:0007669"/>
    <property type="project" value="UniProtKB-UniRule"/>
</dbReference>
<dbReference type="GO" id="GO:0004810">
    <property type="term" value="F:CCA tRNA nucleotidyltransferase activity"/>
    <property type="evidence" value="ECO:0007669"/>
    <property type="project" value="UniProtKB-UniRule"/>
</dbReference>
<dbReference type="GO" id="GO:0004112">
    <property type="term" value="F:cyclic-nucleotide phosphodiesterase activity"/>
    <property type="evidence" value="ECO:0007669"/>
    <property type="project" value="UniProtKB-UniRule"/>
</dbReference>
<dbReference type="GO" id="GO:0000287">
    <property type="term" value="F:magnesium ion binding"/>
    <property type="evidence" value="ECO:0007669"/>
    <property type="project" value="UniProtKB-UniRule"/>
</dbReference>
<dbReference type="GO" id="GO:0016791">
    <property type="term" value="F:phosphatase activity"/>
    <property type="evidence" value="ECO:0007669"/>
    <property type="project" value="UniProtKB-UniRule"/>
</dbReference>
<dbReference type="GO" id="GO:0000049">
    <property type="term" value="F:tRNA binding"/>
    <property type="evidence" value="ECO:0007669"/>
    <property type="project" value="UniProtKB-UniRule"/>
</dbReference>
<dbReference type="GO" id="GO:0042245">
    <property type="term" value="P:RNA repair"/>
    <property type="evidence" value="ECO:0007669"/>
    <property type="project" value="UniProtKB-KW"/>
</dbReference>
<dbReference type="GO" id="GO:0001680">
    <property type="term" value="P:tRNA 3'-terminal CCA addition"/>
    <property type="evidence" value="ECO:0007669"/>
    <property type="project" value="UniProtKB-UniRule"/>
</dbReference>
<dbReference type="CDD" id="cd00077">
    <property type="entry name" value="HDc"/>
    <property type="match status" value="1"/>
</dbReference>
<dbReference type="CDD" id="cd05398">
    <property type="entry name" value="NT_ClassII-CCAase"/>
    <property type="match status" value="1"/>
</dbReference>
<dbReference type="Gene3D" id="3.30.460.10">
    <property type="entry name" value="Beta Polymerase, domain 2"/>
    <property type="match status" value="1"/>
</dbReference>
<dbReference type="Gene3D" id="1.10.3090.10">
    <property type="entry name" value="cca-adding enzyme, domain 2"/>
    <property type="match status" value="1"/>
</dbReference>
<dbReference type="HAMAP" id="MF_01261">
    <property type="entry name" value="CCA_bact_type1"/>
    <property type="match status" value="1"/>
</dbReference>
<dbReference type="HAMAP" id="MF_01262">
    <property type="entry name" value="CCA_bact_type2"/>
    <property type="match status" value="1"/>
</dbReference>
<dbReference type="InterPro" id="IPR012006">
    <property type="entry name" value="CCA_bact"/>
</dbReference>
<dbReference type="InterPro" id="IPR003607">
    <property type="entry name" value="HD/PDEase_dom"/>
</dbReference>
<dbReference type="InterPro" id="IPR006674">
    <property type="entry name" value="HD_domain"/>
</dbReference>
<dbReference type="InterPro" id="IPR043519">
    <property type="entry name" value="NT_sf"/>
</dbReference>
<dbReference type="InterPro" id="IPR002646">
    <property type="entry name" value="PolA_pol_head_dom"/>
</dbReference>
<dbReference type="InterPro" id="IPR032828">
    <property type="entry name" value="PolyA_RNA-bd"/>
</dbReference>
<dbReference type="InterPro" id="IPR050124">
    <property type="entry name" value="tRNA_CCA-adding_enzyme"/>
</dbReference>
<dbReference type="NCBIfam" id="NF008137">
    <property type="entry name" value="PRK10885.1"/>
    <property type="match status" value="1"/>
</dbReference>
<dbReference type="PANTHER" id="PTHR47545">
    <property type="entry name" value="MULTIFUNCTIONAL CCA PROTEIN"/>
    <property type="match status" value="1"/>
</dbReference>
<dbReference type="PANTHER" id="PTHR47545:SF1">
    <property type="entry name" value="MULTIFUNCTIONAL CCA PROTEIN"/>
    <property type="match status" value="1"/>
</dbReference>
<dbReference type="Pfam" id="PF01966">
    <property type="entry name" value="HD"/>
    <property type="match status" value="1"/>
</dbReference>
<dbReference type="Pfam" id="PF01743">
    <property type="entry name" value="PolyA_pol"/>
    <property type="match status" value="1"/>
</dbReference>
<dbReference type="Pfam" id="PF12627">
    <property type="entry name" value="PolyA_pol_RNAbd"/>
    <property type="match status" value="1"/>
</dbReference>
<dbReference type="PIRSF" id="PIRSF000813">
    <property type="entry name" value="CCA_bact"/>
    <property type="match status" value="1"/>
</dbReference>
<dbReference type="SMART" id="SM00471">
    <property type="entry name" value="HDc"/>
    <property type="match status" value="1"/>
</dbReference>
<dbReference type="SUPFAM" id="SSF81301">
    <property type="entry name" value="Nucleotidyltransferase"/>
    <property type="match status" value="1"/>
</dbReference>
<dbReference type="SUPFAM" id="SSF81891">
    <property type="entry name" value="Poly A polymerase C-terminal region-like"/>
    <property type="match status" value="1"/>
</dbReference>
<dbReference type="PROSITE" id="PS51831">
    <property type="entry name" value="HD"/>
    <property type="match status" value="1"/>
</dbReference>
<protein>
    <recommendedName>
        <fullName evidence="1">Multifunctional CCA protein</fullName>
    </recommendedName>
    <domain>
        <recommendedName>
            <fullName evidence="1">CCA-adding enzyme</fullName>
            <ecNumber evidence="1">2.7.7.72</ecNumber>
        </recommendedName>
        <alternativeName>
            <fullName evidence="1">CCA tRNA nucleotidyltransferase</fullName>
        </alternativeName>
        <alternativeName>
            <fullName evidence="1">tRNA CCA-pyrophosphorylase</fullName>
        </alternativeName>
        <alternativeName>
            <fullName evidence="1">tRNA adenylyl-/cytidylyl-transferase</fullName>
        </alternativeName>
        <alternativeName>
            <fullName evidence="1">tRNA nucleotidyltransferase</fullName>
        </alternativeName>
        <alternativeName>
            <fullName evidence="1">tRNA-NT</fullName>
        </alternativeName>
    </domain>
    <domain>
        <recommendedName>
            <fullName evidence="1">2'-nucleotidase</fullName>
            <ecNumber evidence="1">3.1.3.-</ecNumber>
        </recommendedName>
    </domain>
    <domain>
        <recommendedName>
            <fullName evidence="1">2',3'-cyclic phosphodiesterase</fullName>
            <ecNumber evidence="1">3.1.4.-</ecNumber>
        </recommendedName>
    </domain>
    <domain>
        <recommendedName>
            <fullName evidence="1">Phosphatase</fullName>
            <ecNumber evidence="1">3.1.3.-</ecNumber>
        </recommendedName>
    </domain>
</protein>
<evidence type="ECO:0000255" key="1">
    <source>
        <dbReference type="HAMAP-Rule" id="MF_01261"/>
    </source>
</evidence>
<organism>
    <name type="scientific">Pasteurella multocida (strain Pm70)</name>
    <dbReference type="NCBI Taxonomy" id="272843"/>
    <lineage>
        <taxon>Bacteria</taxon>
        <taxon>Pseudomonadati</taxon>
        <taxon>Pseudomonadota</taxon>
        <taxon>Gammaproteobacteria</taxon>
        <taxon>Pasteurellales</taxon>
        <taxon>Pasteurellaceae</taxon>
        <taxon>Pasteurella</taxon>
    </lineage>
</organism>
<sequence>MKIYLVGGAVRDQLLNLVVKDRDWVVVGATPDDLLSQGYQQVGKDFPVFLHPQTKEEYALARTERKAGSGYTGFICDFSPTISLEQDLSRRDLTINALAQDLDGKIYDFYGGLTDLKQRLLRHVSPAFAEDPLRVLRVARFAARYHALGFTIASETRELMQQLSQSGELSNLTAERVWLETEKALLEPHPEVYFQTLQEVGALQVLFPELAALQGVPNPAKYHPEIDTFVHTMLVLQQAVLLTENTDSDKSAVRFAAICHDLGKALTPKEILPHHYGHEKAGVMPTRRLCQRFKLPHAIQDFAELCCEYHSHIHKAFELRAETILKLFNRLDVWRKPERFKALLLVCIADTRGRTGFEQVDYPQREFLWQLYQSALQVNVQDIIQQGFQQQAIRDELNRRRIIAIKQTRAEILPRFTNPC</sequence>